<reference key="1">
    <citation type="submission" date="1995-12" db="EMBL/GenBank/DDBJ databases">
        <authorList>
            <person name="Miosga T."/>
            <person name="Juhnke H."/>
            <person name="Sterkel C."/>
            <person name="Zimmermann F.K."/>
        </authorList>
    </citation>
    <scope>NUCLEOTIDE SEQUENCE [GENOMIC DNA]</scope>
    <source>
        <strain>M5</strain>
    </source>
</reference>
<reference key="2">
    <citation type="journal article" date="1997" name="Nature">
        <title>The nucleotide sequence of Saccharomyces cerevisiae chromosome IV.</title>
        <authorList>
            <person name="Jacq C."/>
            <person name="Alt-Moerbe J."/>
            <person name="Andre B."/>
            <person name="Arnold W."/>
            <person name="Bahr A."/>
            <person name="Ballesta J.P.G."/>
            <person name="Bargues M."/>
            <person name="Baron L."/>
            <person name="Becker A."/>
            <person name="Biteau N."/>
            <person name="Bloecker H."/>
            <person name="Blugeon C."/>
            <person name="Boskovic J."/>
            <person name="Brandt P."/>
            <person name="Brueckner M."/>
            <person name="Buitrago M.J."/>
            <person name="Coster F."/>
            <person name="Delaveau T."/>
            <person name="del Rey F."/>
            <person name="Dujon B."/>
            <person name="Eide L.G."/>
            <person name="Garcia-Cantalejo J.M."/>
            <person name="Goffeau A."/>
            <person name="Gomez-Peris A."/>
            <person name="Granotier C."/>
            <person name="Hanemann V."/>
            <person name="Hankeln T."/>
            <person name="Hoheisel J.D."/>
            <person name="Jaeger W."/>
            <person name="Jimenez A."/>
            <person name="Jonniaux J.-L."/>
            <person name="Kraemer C."/>
            <person name="Kuester H."/>
            <person name="Laamanen P."/>
            <person name="Legros Y."/>
            <person name="Louis E.J."/>
            <person name="Moeller-Rieker S."/>
            <person name="Monnet A."/>
            <person name="Moro M."/>
            <person name="Mueller-Auer S."/>
            <person name="Nussbaumer B."/>
            <person name="Paricio N."/>
            <person name="Paulin L."/>
            <person name="Perea J."/>
            <person name="Perez-Alonso M."/>
            <person name="Perez-Ortin J.E."/>
            <person name="Pohl T.M."/>
            <person name="Prydz H."/>
            <person name="Purnelle B."/>
            <person name="Rasmussen S.W."/>
            <person name="Remacha M.A."/>
            <person name="Revuelta J.L."/>
            <person name="Rieger M."/>
            <person name="Salom D."/>
            <person name="Saluz H.P."/>
            <person name="Saiz J.E."/>
            <person name="Saren A.-M."/>
            <person name="Schaefer M."/>
            <person name="Scharfe M."/>
            <person name="Schmidt E.R."/>
            <person name="Schneider C."/>
            <person name="Scholler P."/>
            <person name="Schwarz S."/>
            <person name="Soler-Mira A."/>
            <person name="Urrestarazu L.A."/>
            <person name="Verhasselt P."/>
            <person name="Vissers S."/>
            <person name="Voet M."/>
            <person name="Volckaert G."/>
            <person name="Wagner G."/>
            <person name="Wambutt R."/>
            <person name="Wedler E."/>
            <person name="Wedler H."/>
            <person name="Woelfl S."/>
            <person name="Harris D.E."/>
            <person name="Bowman S."/>
            <person name="Brown D."/>
            <person name="Churcher C.M."/>
            <person name="Connor R."/>
            <person name="Dedman K."/>
            <person name="Gentles S."/>
            <person name="Hamlin N."/>
            <person name="Hunt S."/>
            <person name="Jones L."/>
            <person name="McDonald S."/>
            <person name="Murphy L.D."/>
            <person name="Niblett D."/>
            <person name="Odell C."/>
            <person name="Oliver K."/>
            <person name="Rajandream M.A."/>
            <person name="Richards C."/>
            <person name="Shore L."/>
            <person name="Walsh S.V."/>
            <person name="Barrell B.G."/>
            <person name="Dietrich F.S."/>
            <person name="Mulligan J.T."/>
            <person name="Allen E."/>
            <person name="Araujo R."/>
            <person name="Aviles E."/>
            <person name="Berno A."/>
            <person name="Carpenter J."/>
            <person name="Chen E."/>
            <person name="Cherry J.M."/>
            <person name="Chung E."/>
            <person name="Duncan M."/>
            <person name="Hunicke-Smith S."/>
            <person name="Hyman R.W."/>
            <person name="Komp C."/>
            <person name="Lashkari D."/>
            <person name="Lew H."/>
            <person name="Lin D."/>
            <person name="Mosedale D."/>
            <person name="Nakahara K."/>
            <person name="Namath A."/>
            <person name="Oefner P."/>
            <person name="Oh C."/>
            <person name="Petel F.X."/>
            <person name="Roberts D."/>
            <person name="Schramm S."/>
            <person name="Schroeder M."/>
            <person name="Shogren T."/>
            <person name="Shroff N."/>
            <person name="Winant A."/>
            <person name="Yelton M.A."/>
            <person name="Botstein D."/>
            <person name="Davis R.W."/>
            <person name="Johnston M."/>
            <person name="Andrews S."/>
            <person name="Brinkman R."/>
            <person name="Cooper J."/>
            <person name="Ding H."/>
            <person name="Du Z."/>
            <person name="Favello A."/>
            <person name="Fulton L."/>
            <person name="Gattung S."/>
            <person name="Greco T."/>
            <person name="Hallsworth K."/>
            <person name="Hawkins J."/>
            <person name="Hillier L.W."/>
            <person name="Jier M."/>
            <person name="Johnson D."/>
            <person name="Johnston L."/>
            <person name="Kirsten J."/>
            <person name="Kucaba T."/>
            <person name="Langston Y."/>
            <person name="Latreille P."/>
            <person name="Le T."/>
            <person name="Mardis E."/>
            <person name="Menezes S."/>
            <person name="Miller N."/>
            <person name="Nhan M."/>
            <person name="Pauley A."/>
            <person name="Peluso D."/>
            <person name="Rifkin L."/>
            <person name="Riles L."/>
            <person name="Taich A."/>
            <person name="Trevaskis E."/>
            <person name="Vignati D."/>
            <person name="Wilcox L."/>
            <person name="Wohldman P."/>
            <person name="Vaudin M."/>
            <person name="Wilson R."/>
            <person name="Waterston R."/>
            <person name="Albermann K."/>
            <person name="Hani J."/>
            <person name="Heumann K."/>
            <person name="Kleine K."/>
            <person name="Mewes H.-W."/>
            <person name="Zollner A."/>
            <person name="Zaccaria P."/>
        </authorList>
    </citation>
    <scope>NUCLEOTIDE SEQUENCE [LARGE SCALE GENOMIC DNA]</scope>
    <source>
        <strain>ATCC 204508 / S288c</strain>
    </source>
</reference>
<reference key="3">
    <citation type="journal article" date="2014" name="G3 (Bethesda)">
        <title>The reference genome sequence of Saccharomyces cerevisiae: Then and now.</title>
        <authorList>
            <person name="Engel S.R."/>
            <person name="Dietrich F.S."/>
            <person name="Fisk D.G."/>
            <person name="Binkley G."/>
            <person name="Balakrishnan R."/>
            <person name="Costanzo M.C."/>
            <person name="Dwight S.S."/>
            <person name="Hitz B.C."/>
            <person name="Karra K."/>
            <person name="Nash R.S."/>
            <person name="Weng S."/>
            <person name="Wong E.D."/>
            <person name="Lloyd P."/>
            <person name="Skrzypek M.S."/>
            <person name="Miyasato S.R."/>
            <person name="Simison M."/>
            <person name="Cherry J.M."/>
        </authorList>
    </citation>
    <scope>GENOME REANNOTATION</scope>
    <source>
        <strain>ATCC 204508 / S288c</strain>
    </source>
</reference>
<reference key="4">
    <citation type="journal article" date="2003" name="Nature">
        <title>Global analysis of protein expression in yeast.</title>
        <authorList>
            <person name="Ghaemmaghami S."/>
            <person name="Huh W.-K."/>
            <person name="Bower K."/>
            <person name="Howson R.W."/>
            <person name="Belle A."/>
            <person name="Dephoure N."/>
            <person name="O'Shea E.K."/>
            <person name="Weissman J.S."/>
        </authorList>
    </citation>
    <scope>LEVEL OF PROTEIN EXPRESSION [LARGE SCALE ANALYSIS]</scope>
</reference>
<reference key="5">
    <citation type="journal article" date="2002" name="Yeast">
        <title>Characterization of Ypr1p from Saccharomyces cerevisiae as a 2-methylbutyraldehyde reductase.</title>
        <authorList>
            <person name="Ford G."/>
            <person name="Ellis E.M."/>
        </authorList>
    </citation>
    <scope>FUNCTION</scope>
    <scope>CATALYTIC ACTIVITY</scope>
    <scope>BIOPHYSICOCHEMICAL PROPERTIES</scope>
    <scope>SUBSTRATE SPECIFICITY</scope>
    <scope>INDUCTION</scope>
    <scope>DISRUPTION PHENOTYPE</scope>
    <source>
        <strain>S150</strain>
    </source>
</reference>
<feature type="chain" id="PRO_0000124612" description="Aldehyde reductase YPR1">
    <location>
        <begin position="1"/>
        <end position="312"/>
    </location>
</feature>
<feature type="active site" description="Proton donor" evidence="1">
    <location>
        <position position="56"/>
    </location>
</feature>
<feature type="binding site" evidence="1">
    <location>
        <position position="112"/>
    </location>
    <ligand>
        <name>substrate</name>
    </ligand>
</feature>
<feature type="binding site" evidence="1">
    <location>
        <begin position="220"/>
        <end position="274"/>
    </location>
    <ligand>
        <name>NADP(+)</name>
        <dbReference type="ChEBI" id="CHEBI:58349"/>
    </ligand>
</feature>
<feature type="site" description="Lowers pKa of active site Tyr" evidence="1">
    <location>
        <position position="81"/>
    </location>
</feature>
<organism>
    <name type="scientific">Saccharomyces cerevisiae (strain ATCC 204508 / S288c)</name>
    <name type="common">Baker's yeast</name>
    <dbReference type="NCBI Taxonomy" id="559292"/>
    <lineage>
        <taxon>Eukaryota</taxon>
        <taxon>Fungi</taxon>
        <taxon>Dikarya</taxon>
        <taxon>Ascomycota</taxon>
        <taxon>Saccharomycotina</taxon>
        <taxon>Saccharomycetes</taxon>
        <taxon>Saccharomycetales</taxon>
        <taxon>Saccharomycetaceae</taxon>
        <taxon>Saccharomyces</taxon>
    </lineage>
</organism>
<gene>
    <name type="primary">YPR1</name>
    <name type="ordered locus">YDR368W</name>
    <name type="ORF">D9481.8</name>
</gene>
<protein>
    <recommendedName>
        <fullName evidence="4">Aldehyde reductase YPR1</fullName>
        <ecNumber evidence="2">1.1.1.2</ecNumber>
    </recommendedName>
    <alternativeName>
        <fullName evidence="4">2-methylbutyraldehyde reductase</fullName>
    </alternativeName>
</protein>
<sequence>MPATLKNSSATLKLNTGASIPVLGFGTWRSVDNNGYHSVIAALKAGYRHIDAAAIYLNEEEVGRAIKDSGVPREEIFITTKLWGTEQRDPEAALNKSLKRLGLDYVDLYLMHWPVPLKTDRVTDGNVLCIPTLEDGTVDIDTKEWNFIKTWELMQELPKTGKTKAVGVSNFSINNIKELLESPNNKVVPATNQIEIHPLLPQDELIAFCKEKGIVVEAYSPFGSANAPLLKEQAIIDMAKKHGVEPAQLIISWSIQRGYVVLAKSVNPERIVSNFKIFTLPEDDFKTISNLSKVHGTKRVVDMKWGSFPIFQ</sequence>
<keyword id="KW-0963">Cytoplasm</keyword>
<keyword id="KW-0521">NADP</keyword>
<keyword id="KW-0560">Oxidoreductase</keyword>
<keyword id="KW-1185">Reference proteome</keyword>
<dbReference type="EC" id="1.1.1.2" evidence="2"/>
<dbReference type="EMBL" id="X80642">
    <property type="protein sequence ID" value="CAA56686.1"/>
    <property type="molecule type" value="Genomic_DNA"/>
</dbReference>
<dbReference type="EMBL" id="U28373">
    <property type="protein sequence ID" value="AAB64804.1"/>
    <property type="molecule type" value="Genomic_DNA"/>
</dbReference>
<dbReference type="EMBL" id="BK006938">
    <property type="protein sequence ID" value="DAA12209.1"/>
    <property type="molecule type" value="Genomic_DNA"/>
</dbReference>
<dbReference type="PIR" id="S61163">
    <property type="entry name" value="S61163"/>
</dbReference>
<dbReference type="RefSeq" id="NP_010656.1">
    <property type="nucleotide sequence ID" value="NM_001180676.1"/>
</dbReference>
<dbReference type="SMR" id="Q12458"/>
<dbReference type="BioGRID" id="32427">
    <property type="interactions" value="58"/>
</dbReference>
<dbReference type="DIP" id="DIP-4334N"/>
<dbReference type="FunCoup" id="Q12458">
    <property type="interactions" value="370"/>
</dbReference>
<dbReference type="IntAct" id="Q12458">
    <property type="interactions" value="4"/>
</dbReference>
<dbReference type="MINT" id="Q12458"/>
<dbReference type="STRING" id="4932.YDR368W"/>
<dbReference type="iPTMnet" id="Q12458"/>
<dbReference type="PaxDb" id="4932-YDR368W"/>
<dbReference type="PeptideAtlas" id="Q12458"/>
<dbReference type="EnsemblFungi" id="YDR368W_mRNA">
    <property type="protein sequence ID" value="YDR368W"/>
    <property type="gene ID" value="YDR368W"/>
</dbReference>
<dbReference type="GeneID" id="851974"/>
<dbReference type="KEGG" id="sce:YDR368W"/>
<dbReference type="AGR" id="SGD:S000002776"/>
<dbReference type="SGD" id="S000002776">
    <property type="gene designation" value="YPR1"/>
</dbReference>
<dbReference type="VEuPathDB" id="FungiDB:YDR368W"/>
<dbReference type="eggNOG" id="KOG1577">
    <property type="taxonomic scope" value="Eukaryota"/>
</dbReference>
<dbReference type="GeneTree" id="ENSGT00940000176580"/>
<dbReference type="HOGENOM" id="CLU_023205_0_0_1"/>
<dbReference type="InParanoid" id="Q12458"/>
<dbReference type="OMA" id="KLWGTEQ"/>
<dbReference type="OrthoDB" id="416253at2759"/>
<dbReference type="BioCyc" id="YEAST:G3O-29918-MONOMER"/>
<dbReference type="BioGRID-ORCS" id="851974">
    <property type="hits" value="0 hits in 10 CRISPR screens"/>
</dbReference>
<dbReference type="PRO" id="PR:Q12458"/>
<dbReference type="Proteomes" id="UP000002311">
    <property type="component" value="Chromosome IV"/>
</dbReference>
<dbReference type="RNAct" id="Q12458">
    <property type="molecule type" value="protein"/>
</dbReference>
<dbReference type="GO" id="GO:0005737">
    <property type="term" value="C:cytoplasm"/>
    <property type="evidence" value="ECO:0007005"/>
    <property type="project" value="SGD"/>
</dbReference>
<dbReference type="GO" id="GO:0005829">
    <property type="term" value="C:cytosol"/>
    <property type="evidence" value="ECO:0000318"/>
    <property type="project" value="GO_Central"/>
</dbReference>
<dbReference type="GO" id="GO:0005634">
    <property type="term" value="C:nucleus"/>
    <property type="evidence" value="ECO:0007005"/>
    <property type="project" value="SGD"/>
</dbReference>
<dbReference type="GO" id="GO:0004032">
    <property type="term" value="F:aldose reductase (NADPH) activity"/>
    <property type="evidence" value="ECO:0000314"/>
    <property type="project" value="SGD"/>
</dbReference>
<dbReference type="GO" id="GO:0004090">
    <property type="term" value="F:carbonyl reductase (NADPH) activity"/>
    <property type="evidence" value="ECO:0000314"/>
    <property type="project" value="SGD"/>
</dbReference>
<dbReference type="GO" id="GO:0052588">
    <property type="term" value="F:diacetyl reductase ((S)-acetoin forming) (NAD+) activity"/>
    <property type="evidence" value="ECO:0000314"/>
    <property type="project" value="SGD"/>
</dbReference>
<dbReference type="GO" id="GO:0045149">
    <property type="term" value="P:acetoin metabolic process"/>
    <property type="evidence" value="ECO:0000314"/>
    <property type="project" value="SGD"/>
</dbReference>
<dbReference type="GO" id="GO:0019568">
    <property type="term" value="P:arabinose catabolic process"/>
    <property type="evidence" value="ECO:0000314"/>
    <property type="project" value="SGD"/>
</dbReference>
<dbReference type="GO" id="GO:0034599">
    <property type="term" value="P:cellular response to oxidative stress"/>
    <property type="evidence" value="ECO:0000316"/>
    <property type="project" value="SGD"/>
</dbReference>
<dbReference type="GO" id="GO:0042843">
    <property type="term" value="P:D-xylose catabolic process"/>
    <property type="evidence" value="ECO:0000314"/>
    <property type="project" value="SGD"/>
</dbReference>
<dbReference type="CDD" id="cd19117">
    <property type="entry name" value="AKR_AKR3A1-2"/>
    <property type="match status" value="1"/>
</dbReference>
<dbReference type="FunFam" id="3.20.20.100:FF:000018">
    <property type="entry name" value="Glycerol dehydrogenase Gcy1"/>
    <property type="match status" value="1"/>
</dbReference>
<dbReference type="Gene3D" id="3.20.20.100">
    <property type="entry name" value="NADP-dependent oxidoreductase domain"/>
    <property type="match status" value="1"/>
</dbReference>
<dbReference type="InterPro" id="IPR020471">
    <property type="entry name" value="AKR"/>
</dbReference>
<dbReference type="InterPro" id="IPR044489">
    <property type="entry name" value="AKR3A"/>
</dbReference>
<dbReference type="InterPro" id="IPR018170">
    <property type="entry name" value="Aldo/ket_reductase_CS"/>
</dbReference>
<dbReference type="InterPro" id="IPR023210">
    <property type="entry name" value="NADP_OxRdtase_dom"/>
</dbReference>
<dbReference type="InterPro" id="IPR036812">
    <property type="entry name" value="NADP_OxRdtase_dom_sf"/>
</dbReference>
<dbReference type="PANTHER" id="PTHR11732">
    <property type="entry name" value="ALDO/KETO REDUCTASE"/>
    <property type="match status" value="1"/>
</dbReference>
<dbReference type="Pfam" id="PF00248">
    <property type="entry name" value="Aldo_ket_red"/>
    <property type="match status" value="1"/>
</dbReference>
<dbReference type="PIRSF" id="PIRSF000097">
    <property type="entry name" value="AKR"/>
    <property type="match status" value="1"/>
</dbReference>
<dbReference type="PRINTS" id="PR00069">
    <property type="entry name" value="ALDKETRDTASE"/>
</dbReference>
<dbReference type="SUPFAM" id="SSF51430">
    <property type="entry name" value="NAD(P)-linked oxidoreductase"/>
    <property type="match status" value="1"/>
</dbReference>
<dbReference type="PROSITE" id="PS00798">
    <property type="entry name" value="ALDOKETO_REDUCTASE_1"/>
    <property type="match status" value="1"/>
</dbReference>
<dbReference type="PROSITE" id="PS00062">
    <property type="entry name" value="ALDOKETO_REDUCTASE_2"/>
    <property type="match status" value="1"/>
</dbReference>
<dbReference type="PROSITE" id="PS00063">
    <property type="entry name" value="ALDOKETO_REDUCTASE_3"/>
    <property type="match status" value="1"/>
</dbReference>
<evidence type="ECO:0000250" key="1"/>
<evidence type="ECO:0000269" key="2">
    <source>
    </source>
</evidence>
<evidence type="ECO:0000269" key="3">
    <source>
    </source>
</evidence>
<evidence type="ECO:0000303" key="4">
    <source>
    </source>
</evidence>
<evidence type="ECO:0000305" key="5"/>
<evidence type="ECO:0000305" key="6">
    <source>
    </source>
</evidence>
<proteinExistence type="evidence at protein level"/>
<comment type="function">
    <text evidence="2">Aldehyde reductase with broad substrate specificity, catalyzing the NADPH-dependent reduction of aldehydes into the corresponding alcohols. In vitro, displays high specific activity towards 2-methylbutanal (2-methylbutyraldehyde), as well as other aldehydes such as hexanal (a toxic lipid peroxidation product and phytoalexin), but exhibits extremely low activity as a glycerol dehydrogenase. Seems to contribute to 2-methylbutanal reduction in vivo, and may therefore play a role in isoleucine catabolism and fusel alcohol formation.</text>
</comment>
<comment type="catalytic activity">
    <reaction evidence="2">
        <text>a primary alcohol + NADP(+) = an aldehyde + NADPH + H(+)</text>
        <dbReference type="Rhea" id="RHEA:15937"/>
        <dbReference type="ChEBI" id="CHEBI:15378"/>
        <dbReference type="ChEBI" id="CHEBI:15734"/>
        <dbReference type="ChEBI" id="CHEBI:17478"/>
        <dbReference type="ChEBI" id="CHEBI:57783"/>
        <dbReference type="ChEBI" id="CHEBI:58349"/>
        <dbReference type="EC" id="1.1.1.2"/>
    </reaction>
    <physiologicalReaction direction="right-to-left" evidence="6">
        <dbReference type="Rhea" id="RHEA:15939"/>
    </physiologicalReaction>
</comment>
<comment type="catalytic activity">
    <reaction evidence="2">
        <text>2-methylbutan-1-ol + NADP(+) = 2-methylbutanal + NADPH + H(+)</text>
        <dbReference type="Rhea" id="RHEA:84375"/>
        <dbReference type="ChEBI" id="CHEBI:15378"/>
        <dbReference type="ChEBI" id="CHEBI:16182"/>
        <dbReference type="ChEBI" id="CHEBI:48945"/>
        <dbReference type="ChEBI" id="CHEBI:57783"/>
        <dbReference type="ChEBI" id="CHEBI:58349"/>
    </reaction>
    <physiologicalReaction direction="right-to-left" evidence="6">
        <dbReference type="Rhea" id="RHEA:84377"/>
    </physiologicalReaction>
</comment>
<comment type="catalytic activity">
    <reaction evidence="2">
        <text>hexan-1-ol + NADP(+) = hexanal + NADPH + H(+)</text>
        <dbReference type="Rhea" id="RHEA:58404"/>
        <dbReference type="ChEBI" id="CHEBI:15378"/>
        <dbReference type="ChEBI" id="CHEBI:57783"/>
        <dbReference type="ChEBI" id="CHEBI:58349"/>
        <dbReference type="ChEBI" id="CHEBI:87393"/>
        <dbReference type="ChEBI" id="CHEBI:88528"/>
    </reaction>
    <physiologicalReaction direction="right-to-left" evidence="6">
        <dbReference type="Rhea" id="RHEA:58406"/>
    </physiologicalReaction>
</comment>
<comment type="biophysicochemical properties">
    <kinetics>
        <KM evidence="2">1.07 mM for 4-nitrobenzaldehyde</KM>
        <KM evidence="2">0.26 mM for 9,10-phenanthrequinone</KM>
        <KM evidence="2">0.39 mM for hexanal</KM>
        <KM evidence="2">0.9 mM for methylglyoxal</KM>
        <KM evidence="2">1.08 mM for DL-glyceraldehyde</KM>
        <KM evidence="2">1.15 mM for 3-pyridine carboxaldehyde</KM>
        <KM evidence="2">1.09 mM for 2-methylbutanal</KM>
        <KM evidence="2">4.28 mM for succinic semialdehyde</KM>
        <KM evidence="2">6.13 mM for diacetyl</KM>
        <KM evidence="2">418.3 mM for D-xylose</KM>
        <KM evidence="2">0.0087 mM for NADPH</KM>
        <text evidence="2">kcat is 29.60 sec(-1) with 4-nitrobenzaldehyde as substrate. kcat is 4.54 sec(-1) with 9,10-phenanthrequinone as substrate. kcat is 5.90 sec(-1) with hexanal as substrate. kcat is 11.60 sec(-1) with methylglyoxal as substrate. kcat is 12.00 sec(-1) with DL-glyceraldehyde as substrate. kcat is 12.60 sec(-1) with 3-pyridine carboxaldehyde as substrate. kcat is 8.73 sec(-1) with 2-methylbutanal as substrate. kcat is 5.65 sec(-1) with succinic semialdehyde as substrate. kcat is 5.67 sec(-1) with diacetyl as substrate. kcat is 14.5 sec(-1) with D-xylose as substrate.</text>
    </kinetics>
    <phDependence>
        <text evidence="2">Optimum pH is 5.4 with 4-nitrobenzaldehyde as substrate, but can function over a broad pH range.</text>
    </phDependence>
</comment>
<comment type="subcellular location">
    <subcellularLocation>
        <location>Cytoplasm</location>
    </subcellularLocation>
</comment>
<comment type="induction">
    <text evidence="2">Is expressed during aerobic growth on glucose, and its levels are rapidly up-regulated by osmotic and oxidative stress.</text>
</comment>
<comment type="disruption phenotype">
    <text evidence="2">Yeast in which the YPR1 gene has been deleted possess 50% lower 2-methylbutanal reductase activity than the wild-type strain. This suggests that the enzyme may contribute to 2-methylbutanal reduction in vivo.</text>
</comment>
<comment type="miscellaneous">
    <text evidence="3">Present with 14100 molecules/cell in log phase SD medium.</text>
</comment>
<comment type="similarity">
    <text evidence="5">Belongs to the aldo/keto reductase family.</text>
</comment>
<name>YPR1_YEAST</name>
<accession>Q12458</accession>
<accession>D6VSZ9</accession>